<accession>Q8EHW1</accession>
<protein>
    <recommendedName>
        <fullName evidence="1">S-ribosylhomocysteine lyase</fullName>
        <ecNumber evidence="1">4.4.1.21</ecNumber>
    </recommendedName>
    <alternativeName>
        <fullName evidence="1">AI-2 synthesis protein</fullName>
    </alternativeName>
    <alternativeName>
        <fullName evidence="1">Autoinducer-2 production protein LuxS</fullName>
    </alternativeName>
</protein>
<comment type="function">
    <text evidence="1">Involved in the synthesis of autoinducer 2 (AI-2) which is secreted by bacteria and is used to communicate both the cell density and the metabolic potential of the environment. The regulation of gene expression in response to changes in cell density is called quorum sensing. Catalyzes the transformation of S-ribosylhomocysteine (RHC) to homocysteine (HC) and 4,5-dihydroxy-2,3-pentadione (DPD).</text>
</comment>
<comment type="catalytic activity">
    <reaction evidence="1">
        <text>S-(5-deoxy-D-ribos-5-yl)-L-homocysteine = (S)-4,5-dihydroxypentane-2,3-dione + L-homocysteine</text>
        <dbReference type="Rhea" id="RHEA:17753"/>
        <dbReference type="ChEBI" id="CHEBI:29484"/>
        <dbReference type="ChEBI" id="CHEBI:58195"/>
        <dbReference type="ChEBI" id="CHEBI:58199"/>
        <dbReference type="EC" id="4.4.1.21"/>
    </reaction>
</comment>
<comment type="cofactor">
    <cofactor evidence="1">
        <name>Fe cation</name>
        <dbReference type="ChEBI" id="CHEBI:24875"/>
    </cofactor>
    <text evidence="1">Binds 1 Fe cation per subunit.</text>
</comment>
<comment type="subunit">
    <text evidence="1">Homodimer.</text>
</comment>
<comment type="similarity">
    <text evidence="1">Belongs to the LuxS family.</text>
</comment>
<name>LUXS_SHEON</name>
<feature type="chain" id="PRO_0000172251" description="S-ribosylhomocysteine lyase">
    <location>
        <begin position="1"/>
        <end position="169"/>
    </location>
</feature>
<feature type="binding site" evidence="1">
    <location>
        <position position="54"/>
    </location>
    <ligand>
        <name>Fe cation</name>
        <dbReference type="ChEBI" id="CHEBI:24875"/>
    </ligand>
</feature>
<feature type="binding site" evidence="1">
    <location>
        <position position="58"/>
    </location>
    <ligand>
        <name>Fe cation</name>
        <dbReference type="ChEBI" id="CHEBI:24875"/>
    </ligand>
</feature>
<feature type="binding site" evidence="1">
    <location>
        <position position="128"/>
    </location>
    <ligand>
        <name>Fe cation</name>
        <dbReference type="ChEBI" id="CHEBI:24875"/>
    </ligand>
</feature>
<dbReference type="EC" id="4.4.1.21" evidence="1"/>
<dbReference type="EMBL" id="AE014299">
    <property type="protein sequence ID" value="AAN54172.1"/>
    <property type="molecule type" value="Genomic_DNA"/>
</dbReference>
<dbReference type="RefSeq" id="NP_716727.1">
    <property type="nucleotide sequence ID" value="NC_004347.2"/>
</dbReference>
<dbReference type="RefSeq" id="WP_011071345.1">
    <property type="nucleotide sequence ID" value="NZ_CP053946.1"/>
</dbReference>
<dbReference type="SMR" id="Q8EHW1"/>
<dbReference type="STRING" id="211586.SO_1101"/>
<dbReference type="PaxDb" id="211586-SO_1101"/>
<dbReference type="KEGG" id="son:SO_1101"/>
<dbReference type="PATRIC" id="fig|211586.12.peg.1055"/>
<dbReference type="eggNOG" id="COG1854">
    <property type="taxonomic scope" value="Bacteria"/>
</dbReference>
<dbReference type="HOGENOM" id="CLU_107531_2_0_6"/>
<dbReference type="OrthoDB" id="9788129at2"/>
<dbReference type="PhylomeDB" id="Q8EHW1"/>
<dbReference type="BioCyc" id="SONE211586:G1GMP-1013-MONOMER"/>
<dbReference type="Proteomes" id="UP000008186">
    <property type="component" value="Chromosome"/>
</dbReference>
<dbReference type="GO" id="GO:0005829">
    <property type="term" value="C:cytosol"/>
    <property type="evidence" value="ECO:0000318"/>
    <property type="project" value="GO_Central"/>
</dbReference>
<dbReference type="GO" id="GO:0005506">
    <property type="term" value="F:iron ion binding"/>
    <property type="evidence" value="ECO:0007669"/>
    <property type="project" value="InterPro"/>
</dbReference>
<dbReference type="GO" id="GO:0043768">
    <property type="term" value="F:S-ribosylhomocysteine lyase activity"/>
    <property type="evidence" value="ECO:0000318"/>
    <property type="project" value="GO_Central"/>
</dbReference>
<dbReference type="GO" id="GO:0019284">
    <property type="term" value="P:L-methionine salvage from S-adenosylmethionine"/>
    <property type="evidence" value="ECO:0000318"/>
    <property type="project" value="GO_Central"/>
</dbReference>
<dbReference type="GO" id="GO:0009372">
    <property type="term" value="P:quorum sensing"/>
    <property type="evidence" value="ECO:0007669"/>
    <property type="project" value="UniProtKB-UniRule"/>
</dbReference>
<dbReference type="FunFam" id="3.30.1360.80:FF:000001">
    <property type="entry name" value="S-ribosylhomocysteine lyase"/>
    <property type="match status" value="1"/>
</dbReference>
<dbReference type="Gene3D" id="3.30.1360.80">
    <property type="entry name" value="S-ribosylhomocysteinase (LuxS)"/>
    <property type="match status" value="1"/>
</dbReference>
<dbReference type="HAMAP" id="MF_00091">
    <property type="entry name" value="LuxS"/>
    <property type="match status" value="1"/>
</dbReference>
<dbReference type="InterPro" id="IPR037005">
    <property type="entry name" value="LuxS_sf"/>
</dbReference>
<dbReference type="InterPro" id="IPR011249">
    <property type="entry name" value="Metalloenz_LuxS/M16"/>
</dbReference>
<dbReference type="InterPro" id="IPR003815">
    <property type="entry name" value="S-ribosylhomocysteinase"/>
</dbReference>
<dbReference type="NCBIfam" id="NF002602">
    <property type="entry name" value="PRK02260.1-2"/>
    <property type="match status" value="1"/>
</dbReference>
<dbReference type="PANTHER" id="PTHR35799">
    <property type="entry name" value="S-RIBOSYLHOMOCYSTEINE LYASE"/>
    <property type="match status" value="1"/>
</dbReference>
<dbReference type="PANTHER" id="PTHR35799:SF1">
    <property type="entry name" value="S-RIBOSYLHOMOCYSTEINE LYASE"/>
    <property type="match status" value="1"/>
</dbReference>
<dbReference type="Pfam" id="PF02664">
    <property type="entry name" value="LuxS"/>
    <property type="match status" value="1"/>
</dbReference>
<dbReference type="PIRSF" id="PIRSF006160">
    <property type="entry name" value="AI2"/>
    <property type="match status" value="1"/>
</dbReference>
<dbReference type="PRINTS" id="PR01487">
    <property type="entry name" value="LUXSPROTEIN"/>
</dbReference>
<dbReference type="SUPFAM" id="SSF63411">
    <property type="entry name" value="LuxS/MPP-like metallohydrolase"/>
    <property type="match status" value="1"/>
</dbReference>
<gene>
    <name evidence="1" type="primary">luxS</name>
    <name type="ordered locus">SO_1101</name>
</gene>
<keyword id="KW-0071">Autoinducer synthesis</keyword>
<keyword id="KW-0408">Iron</keyword>
<keyword id="KW-0456">Lyase</keyword>
<keyword id="KW-0479">Metal-binding</keyword>
<keyword id="KW-0673">Quorum sensing</keyword>
<keyword id="KW-1185">Reference proteome</keyword>
<proteinExistence type="inferred from homology"/>
<sequence>MPLLDSFTVDHTRMNAPAVRVAKHMTTPKGDAITVFDLRFCAPNKDILSERGIHTLEHLFAGFMRDHLNGDDVEIIDISPMGCRTGFYMSLIGVPTERQVADAWLASMEDVLKVVEQSEIPELNEYQCGTYEMHSLEQAQDIARNIIAAGVSVNRNDDLKLSDEILGKL</sequence>
<organism>
    <name type="scientific">Shewanella oneidensis (strain ATCC 700550 / JCM 31522 / CIP 106686 / LMG 19005 / NCIMB 14063 / MR-1)</name>
    <dbReference type="NCBI Taxonomy" id="211586"/>
    <lineage>
        <taxon>Bacteria</taxon>
        <taxon>Pseudomonadati</taxon>
        <taxon>Pseudomonadota</taxon>
        <taxon>Gammaproteobacteria</taxon>
        <taxon>Alteromonadales</taxon>
        <taxon>Shewanellaceae</taxon>
        <taxon>Shewanella</taxon>
    </lineage>
</organism>
<reference key="1">
    <citation type="journal article" date="2002" name="Nat. Biotechnol.">
        <title>Genome sequence of the dissimilatory metal ion-reducing bacterium Shewanella oneidensis.</title>
        <authorList>
            <person name="Heidelberg J.F."/>
            <person name="Paulsen I.T."/>
            <person name="Nelson K.E."/>
            <person name="Gaidos E.J."/>
            <person name="Nelson W.C."/>
            <person name="Read T.D."/>
            <person name="Eisen J.A."/>
            <person name="Seshadri R."/>
            <person name="Ward N.L."/>
            <person name="Methe B.A."/>
            <person name="Clayton R.A."/>
            <person name="Meyer T."/>
            <person name="Tsapin A."/>
            <person name="Scott J."/>
            <person name="Beanan M.J."/>
            <person name="Brinkac L.M."/>
            <person name="Daugherty S.C."/>
            <person name="DeBoy R.T."/>
            <person name="Dodson R.J."/>
            <person name="Durkin A.S."/>
            <person name="Haft D.H."/>
            <person name="Kolonay J.F."/>
            <person name="Madupu R."/>
            <person name="Peterson J.D."/>
            <person name="Umayam L.A."/>
            <person name="White O."/>
            <person name="Wolf A.M."/>
            <person name="Vamathevan J.J."/>
            <person name="Weidman J.F."/>
            <person name="Impraim M."/>
            <person name="Lee K."/>
            <person name="Berry K.J."/>
            <person name="Lee C."/>
            <person name="Mueller J."/>
            <person name="Khouri H.M."/>
            <person name="Gill J."/>
            <person name="Utterback T.R."/>
            <person name="McDonald L.A."/>
            <person name="Feldblyum T.V."/>
            <person name="Smith H.O."/>
            <person name="Venter J.C."/>
            <person name="Nealson K.H."/>
            <person name="Fraser C.M."/>
        </authorList>
    </citation>
    <scope>NUCLEOTIDE SEQUENCE [LARGE SCALE GENOMIC DNA]</scope>
    <source>
        <strain>ATCC 700550 / JCM 31522 / CIP 106686 / LMG 19005 / NCIMB 14063 / MR-1</strain>
    </source>
</reference>
<evidence type="ECO:0000255" key="1">
    <source>
        <dbReference type="HAMAP-Rule" id="MF_00091"/>
    </source>
</evidence>